<keyword id="KW-0002">3D-structure</keyword>
<keyword id="KW-0903">Direct protein sequencing</keyword>
<keyword id="KW-1015">Disulfide bond</keyword>
<keyword id="KW-0358">Heparin-binding</keyword>
<keyword id="KW-0959">Myotoxin</keyword>
<keyword id="KW-0964">Secreted</keyword>
<keyword id="KW-0732">Signal</keyword>
<keyword id="KW-0800">Toxin</keyword>
<proteinExistence type="evidence at protein level"/>
<name>PA2H1_AGKCL</name>
<organism>
    <name type="scientific">Agkistrodon contortrix laticinctus</name>
    <name type="common">Broad-banded copperhead</name>
    <name type="synonym">Agkistrodon mokasen laticinctus</name>
    <dbReference type="NCBI Taxonomy" id="2782196"/>
    <lineage>
        <taxon>Eukaryota</taxon>
        <taxon>Metazoa</taxon>
        <taxon>Chordata</taxon>
        <taxon>Craniata</taxon>
        <taxon>Vertebrata</taxon>
        <taxon>Euteleostomi</taxon>
        <taxon>Lepidosauria</taxon>
        <taxon>Squamata</taxon>
        <taxon>Bifurcata</taxon>
        <taxon>Unidentata</taxon>
        <taxon>Episquamata</taxon>
        <taxon>Toxicofera</taxon>
        <taxon>Serpentes</taxon>
        <taxon>Colubroidea</taxon>
        <taxon>Viperidae</taxon>
        <taxon>Crotalinae</taxon>
        <taxon>Agkistrodon</taxon>
    </lineage>
</organism>
<accession>P49121</accession>
<dbReference type="EMBL" id="U21335">
    <property type="protein sequence ID" value="AAC59887.1"/>
    <property type="molecule type" value="mRNA"/>
</dbReference>
<dbReference type="PIR" id="S68429">
    <property type="entry name" value="S68429"/>
</dbReference>
<dbReference type="PDB" id="1S8G">
    <property type="method" value="X-ray"/>
    <property type="resolution" value="2.30 A"/>
    <property type="chains" value="A=17-137"/>
</dbReference>
<dbReference type="PDB" id="1S8H">
    <property type="method" value="X-ray"/>
    <property type="resolution" value="1.80 A"/>
    <property type="chains" value="A=17-137"/>
</dbReference>
<dbReference type="PDB" id="1S8I">
    <property type="method" value="X-ray"/>
    <property type="resolution" value="1.61 A"/>
    <property type="chains" value="A=17-137"/>
</dbReference>
<dbReference type="PDBsum" id="1S8G"/>
<dbReference type="PDBsum" id="1S8H"/>
<dbReference type="PDBsum" id="1S8I"/>
<dbReference type="SMR" id="P49121"/>
<dbReference type="EvolutionaryTrace" id="P49121"/>
<dbReference type="GO" id="GO:0005576">
    <property type="term" value="C:extracellular region"/>
    <property type="evidence" value="ECO:0007669"/>
    <property type="project" value="UniProtKB-SubCell"/>
</dbReference>
<dbReference type="GO" id="GO:0005509">
    <property type="term" value="F:calcium ion binding"/>
    <property type="evidence" value="ECO:0007669"/>
    <property type="project" value="InterPro"/>
</dbReference>
<dbReference type="GO" id="GO:0047498">
    <property type="term" value="F:calcium-dependent phospholipase A2 activity"/>
    <property type="evidence" value="ECO:0007669"/>
    <property type="project" value="TreeGrafter"/>
</dbReference>
<dbReference type="GO" id="GO:0008201">
    <property type="term" value="F:heparin binding"/>
    <property type="evidence" value="ECO:0007669"/>
    <property type="project" value="UniProtKB-KW"/>
</dbReference>
<dbReference type="GO" id="GO:0005543">
    <property type="term" value="F:phospholipid binding"/>
    <property type="evidence" value="ECO:0007669"/>
    <property type="project" value="TreeGrafter"/>
</dbReference>
<dbReference type="GO" id="GO:0090729">
    <property type="term" value="F:toxin activity"/>
    <property type="evidence" value="ECO:0007669"/>
    <property type="project" value="UniProtKB-KW"/>
</dbReference>
<dbReference type="GO" id="GO:0050482">
    <property type="term" value="P:arachidonate secretion"/>
    <property type="evidence" value="ECO:0007669"/>
    <property type="project" value="InterPro"/>
</dbReference>
<dbReference type="GO" id="GO:0016042">
    <property type="term" value="P:lipid catabolic process"/>
    <property type="evidence" value="ECO:0007669"/>
    <property type="project" value="InterPro"/>
</dbReference>
<dbReference type="GO" id="GO:0042130">
    <property type="term" value="P:negative regulation of T cell proliferation"/>
    <property type="evidence" value="ECO:0007669"/>
    <property type="project" value="TreeGrafter"/>
</dbReference>
<dbReference type="GO" id="GO:0006644">
    <property type="term" value="P:phospholipid metabolic process"/>
    <property type="evidence" value="ECO:0007669"/>
    <property type="project" value="InterPro"/>
</dbReference>
<dbReference type="CDD" id="cd00125">
    <property type="entry name" value="PLA2c"/>
    <property type="match status" value="1"/>
</dbReference>
<dbReference type="FunFam" id="1.20.90.10:FF:000001">
    <property type="entry name" value="Basic phospholipase A2 homolog"/>
    <property type="match status" value="1"/>
</dbReference>
<dbReference type="Gene3D" id="1.20.90.10">
    <property type="entry name" value="Phospholipase A2 domain"/>
    <property type="match status" value="1"/>
</dbReference>
<dbReference type="InterPro" id="IPR001211">
    <property type="entry name" value="PLipase_A2"/>
</dbReference>
<dbReference type="InterPro" id="IPR033112">
    <property type="entry name" value="PLipase_A2_Asp_AS"/>
</dbReference>
<dbReference type="InterPro" id="IPR016090">
    <property type="entry name" value="PLipase_A2_dom"/>
</dbReference>
<dbReference type="InterPro" id="IPR036444">
    <property type="entry name" value="PLipase_A2_dom_sf"/>
</dbReference>
<dbReference type="InterPro" id="IPR033113">
    <property type="entry name" value="PLipase_A2_His_AS"/>
</dbReference>
<dbReference type="PANTHER" id="PTHR11716">
    <property type="entry name" value="PHOSPHOLIPASE A2 FAMILY MEMBER"/>
    <property type="match status" value="1"/>
</dbReference>
<dbReference type="PANTHER" id="PTHR11716:SF9">
    <property type="entry name" value="PHOSPHOLIPASE A2, MEMBRANE ASSOCIATED"/>
    <property type="match status" value="1"/>
</dbReference>
<dbReference type="Pfam" id="PF00068">
    <property type="entry name" value="Phospholip_A2_1"/>
    <property type="match status" value="1"/>
</dbReference>
<dbReference type="PRINTS" id="PR00389">
    <property type="entry name" value="PHPHLIPASEA2"/>
</dbReference>
<dbReference type="SMART" id="SM00085">
    <property type="entry name" value="PA2c"/>
    <property type="match status" value="1"/>
</dbReference>
<dbReference type="SUPFAM" id="SSF48619">
    <property type="entry name" value="Phospholipase A2, PLA2"/>
    <property type="match status" value="1"/>
</dbReference>
<dbReference type="PROSITE" id="PS00119">
    <property type="entry name" value="PA2_ASP"/>
    <property type="match status" value="1"/>
</dbReference>
<dbReference type="PROSITE" id="PS00118">
    <property type="entry name" value="PA2_HIS"/>
    <property type="match status" value="1"/>
</dbReference>
<protein>
    <recommendedName>
        <fullName evidence="9">Basic phospholipase A2 homolog MT1</fullName>
        <shortName>svPLA2 homolog</shortName>
    </recommendedName>
    <alternativeName>
        <fullName evidence="6 7">ACL myotoxin</fullName>
    </alternativeName>
</protein>
<evidence type="ECO:0000250" key="1">
    <source>
        <dbReference type="UniProtKB" id="I6L8L6"/>
    </source>
</evidence>
<evidence type="ECO:0000250" key="2">
    <source>
        <dbReference type="UniProtKB" id="P24605"/>
    </source>
</evidence>
<evidence type="ECO:0000269" key="3">
    <source>
    </source>
</evidence>
<evidence type="ECO:0000269" key="4">
    <source>
    </source>
</evidence>
<evidence type="ECO:0000269" key="5">
    <source>
    </source>
</evidence>
<evidence type="ECO:0000303" key="6">
    <source>
    </source>
</evidence>
<evidence type="ECO:0000303" key="7">
    <source>
    </source>
</evidence>
<evidence type="ECO:0000305" key="8"/>
<evidence type="ECO:0000305" key="9">
    <source>
    </source>
</evidence>
<evidence type="ECO:0000312" key="10">
    <source>
        <dbReference type="PDB" id="1S8G"/>
    </source>
</evidence>
<evidence type="ECO:0000312" key="11">
    <source>
        <dbReference type="PDB" id="1S8H"/>
    </source>
</evidence>
<evidence type="ECO:0000312" key="12">
    <source>
        <dbReference type="PDB" id="1S8I"/>
    </source>
</evidence>
<evidence type="ECO:0007744" key="13">
    <source>
        <dbReference type="PDB" id="1S8G"/>
    </source>
</evidence>
<evidence type="ECO:0007744" key="14">
    <source>
        <dbReference type="PDB" id="1S8H"/>
    </source>
</evidence>
<evidence type="ECO:0007744" key="15">
    <source>
        <dbReference type="PDB" id="1S8I"/>
    </source>
</evidence>
<evidence type="ECO:0007829" key="16">
    <source>
        <dbReference type="PDB" id="1S8G"/>
    </source>
</evidence>
<evidence type="ECO:0007829" key="17">
    <source>
        <dbReference type="PDB" id="1S8I"/>
    </source>
</evidence>
<feature type="signal peptide" evidence="4">
    <location>
        <begin position="1"/>
        <end position="16"/>
    </location>
</feature>
<feature type="chain" id="PRO_0000022775" description="Basic phospholipase A2 homolog MT1">
    <location>
        <begin position="17"/>
        <end position="137"/>
    </location>
</feature>
<feature type="region of interest" description="Important for membrane-damaging activities in eukaryotes and bacteria; heparin-binding" evidence="2">
    <location>
        <begin position="121"/>
        <end position="133"/>
    </location>
</feature>
<feature type="disulfide bond" evidence="3 13 14 15">
    <location>
        <begin position="42"/>
        <end position="131"/>
    </location>
</feature>
<feature type="disulfide bond" evidence="3 13 14 15">
    <location>
        <begin position="44"/>
        <end position="60"/>
    </location>
</feature>
<feature type="disulfide bond" evidence="3 13 14 15">
    <location>
        <begin position="59"/>
        <end position="111"/>
    </location>
</feature>
<feature type="disulfide bond" evidence="3 13 14 15">
    <location>
        <begin position="65"/>
        <end position="137"/>
    </location>
</feature>
<feature type="disulfide bond" evidence="3 13 14 15">
    <location>
        <begin position="66"/>
        <end position="104"/>
    </location>
</feature>
<feature type="disulfide bond" evidence="3 13 14 15">
    <location>
        <begin position="73"/>
        <end position="97"/>
    </location>
</feature>
<feature type="disulfide bond" evidence="3 13 14 15">
    <location>
        <begin position="91"/>
        <end position="102"/>
    </location>
</feature>
<feature type="helix" evidence="17">
    <location>
        <begin position="18"/>
        <end position="29"/>
    </location>
</feature>
<feature type="helix" evidence="17">
    <location>
        <begin position="33"/>
        <end position="37"/>
    </location>
</feature>
<feature type="strand" evidence="17">
    <location>
        <begin position="38"/>
        <end position="40"/>
    </location>
</feature>
<feature type="turn" evidence="17">
    <location>
        <begin position="41"/>
        <end position="43"/>
    </location>
</feature>
<feature type="strand" evidence="16">
    <location>
        <begin position="44"/>
        <end position="47"/>
    </location>
</feature>
<feature type="helix" evidence="17">
    <location>
        <begin position="55"/>
        <end position="68"/>
    </location>
</feature>
<feature type="turn" evidence="17">
    <location>
        <begin position="75"/>
        <end position="77"/>
    </location>
</feature>
<feature type="strand" evidence="17">
    <location>
        <begin position="82"/>
        <end position="85"/>
    </location>
</feature>
<feature type="strand" evidence="17">
    <location>
        <begin position="88"/>
        <end position="91"/>
    </location>
</feature>
<feature type="helix" evidence="17">
    <location>
        <begin position="96"/>
        <end position="114"/>
    </location>
</feature>
<feature type="helix" evidence="17">
    <location>
        <begin position="116"/>
        <end position="118"/>
    </location>
</feature>
<feature type="helix" evidence="17">
    <location>
        <begin position="121"/>
        <end position="124"/>
    </location>
</feature>
<feature type="helix" evidence="17">
    <location>
        <begin position="126"/>
        <end position="128"/>
    </location>
</feature>
<reference key="1">
    <citation type="journal article" date="1996" name="Arch. Biochem. Biophys.">
        <title>cDNA cloning and sequence analysis of a lysine-49 phospholipase A2 myotoxin from Agkistrodon contortrix laticinctus snake venom.</title>
        <authorList>
            <person name="de Araujo H.S.S."/>
            <person name="White S.P."/>
            <person name="Ownby C.L."/>
        </authorList>
    </citation>
    <scope>NUCLEOTIDE SEQUENCE [MRNA]</scope>
    <scope>PROTEIN SEQUENCE OF 17-36</scope>
    <scope>SUBCELLULAR LOCATION</scope>
    <source>
        <tissue>Venom</tissue>
        <tissue>Venom gland</tissue>
    </source>
</reference>
<reference key="2">
    <citation type="journal article" date="1999" name="Toxicon">
        <title>Ability of wedelolactone, heparin, and para-bromophenacyl bromide to antagonize the myotoxic effects of two crotaline venoms and their PLA2 myotoxins.</title>
        <authorList>
            <person name="Melo P.A."/>
            <person name="Ownby C.L."/>
        </authorList>
    </citation>
    <scope>FUNCTION</scope>
    <scope>SUBUNIT</scope>
    <scope>ACTIVITY REGULATION</scope>
    <source>
        <tissue>Venom</tissue>
    </source>
</reference>
<reference evidence="10 11 12" key="3">
    <citation type="journal article" date="2005" name="J. Biol. Chem.">
        <title>A molecular mechanism for Lys49-phospholipase A2 activity based on ligand-induced conformational change.</title>
        <authorList>
            <person name="Ambrosio A.L.B."/>
            <person name="Nonato M.C."/>
            <person name="de Araujo H.S.S."/>
            <person name="Arni R."/>
            <person name="Ward R.J."/>
            <person name="Ownby C.L."/>
            <person name="de Souza D.H.F."/>
            <person name="Garratt R.C."/>
        </authorList>
    </citation>
    <scope>X-RAY CRYSTALLOGRAPHY (1.61 ANGSTROMS) OF 17-137 IN COMPLEX WITH FATTY ACID</scope>
    <scope>DISULFIDE BONDS</scope>
    <source>
        <tissue>Venom</tissue>
    </source>
</reference>
<sequence length="137" mass="15775">MRTLWIVALLLVGVEGSLLELGKMILQETGKNAITSYGSYGCNCGWGHRGQPKDATDRCCFVHKCCYKKLTDCNHKTDRYSYSWKNKAIICEEKNPCLKEMCECDKAVAICLRENLDTYNKKYKAYFKFKCKKPETC</sequence>
<comment type="function">
    <text evidence="1 5">Snake venom phospholipase A2 homolog that lacks enzymatic activity. Has myotoxic activities (PubMed:9920492). A model of myotoxic mechanism has been proposed: an apo Lys49-PLA2 is activated by the entrance of a hydrophobic molecule (e.g. fatty acid) at the hydrophobic channel of the protein leading to a reorientation of a monomer (By similarity). This reorientation causes a transition between 'inactive' to 'active' states, causing alignment of C-terminal and membrane-docking sites (MDoS) side-by-side and putting the membrane-disruption sites (MDiS) in the same plane, exposed to solvent and in a symmetric position for both monomers (By similarity). The MDoS region stabilizes the toxin on membrane by the interaction of charged residues with phospholipid head groups (By similarity). Subsequently, the MDiS region destabilizes the membrane with penetration of hydrophobic residues (By similarity). This insertion causes a disorganization of the membrane, allowing an uncontrolled influx of ions (i.e. calcium and sodium), and eventually triggering irreversible intracellular alterations and cell death (By similarity).</text>
</comment>
<comment type="activity regulation">
    <text evidence="5">Heparin and wedelolactone inhibit the myotoxic activity (PubMed:9920492). The PLA2 inhibitor, para-bromophenacyl bromide (BPB), inhibits the myotoxic activity (PubMed:9920492).</text>
</comment>
<comment type="subunit">
    <text evidence="5">Binds to heparin (PubMed:9920492).</text>
</comment>
<comment type="subcellular location">
    <subcellularLocation>
        <location evidence="4">Secreted</location>
    </subcellularLocation>
</comment>
<comment type="tissue specificity">
    <text evidence="9">Expressed by the venom gland.</text>
</comment>
<comment type="similarity">
    <text evidence="8">Belongs to the phospholipase A2 family. Group II subfamily. K49 sub-subfamily.</text>
</comment>
<comment type="caution">
    <text evidence="8">Does not bind calcium as one of the calcium-binding sites is lost (Asp-&gt;Lys in position 64, which corresponds to 'Lys-49' in the current nomenclature).</text>
</comment>